<keyword id="KW-0007">Acetylation</keyword>
<keyword id="KW-0025">Alternative splicing</keyword>
<keyword id="KW-1185">Reference proteome</keyword>
<proteinExistence type="evidence at protein level"/>
<evidence type="ECO:0000250" key="1"/>
<evidence type="ECO:0000250" key="2">
    <source>
        <dbReference type="UniProtKB" id="Q8TDH9"/>
    </source>
</evidence>
<evidence type="ECO:0000256" key="3">
    <source>
        <dbReference type="SAM" id="MobiDB-lite"/>
    </source>
</evidence>
<evidence type="ECO:0000269" key="4">
    <source>
    </source>
</evidence>
<evidence type="ECO:0000269" key="5">
    <source>
    </source>
</evidence>
<evidence type="ECO:0000269" key="6">
    <source>
    </source>
</evidence>
<evidence type="ECO:0000269" key="7">
    <source>
    </source>
</evidence>
<evidence type="ECO:0000269" key="8">
    <source>
    </source>
</evidence>
<evidence type="ECO:0000269" key="9">
    <source>
    </source>
</evidence>
<evidence type="ECO:0000269" key="10">
    <source>
    </source>
</evidence>
<evidence type="ECO:0000303" key="11">
    <source>
    </source>
</evidence>
<evidence type="ECO:0000305" key="12"/>
<name>BL1S5_MOUSE</name>
<protein>
    <recommendedName>
        <fullName>Biogenesis of lysosome-related organelles complex 1 subunit 5</fullName>
        <shortName>BLOC-1 subunit 5</shortName>
    </recommendedName>
    <alternativeName>
        <fullName>Protein Muted homolog</fullName>
    </alternativeName>
</protein>
<accession>Q8R015</accession>
<accession>Q3TCP2</accession>
<accession>Q8CAC9</accession>
<gene>
    <name type="primary">Bloc1s5</name>
    <name type="synonym">Mu</name>
    <name type="synonym">Muted</name>
</gene>
<comment type="function">
    <text evidence="4 5 8 9 10">Component of the BLOC-1 complex, a complex that is required for normal biogenesis of lysosome-related organelles (LRO), such as platelet dense granules and melanosomes. In concert with the AP-3 complex, the BLOC-1 complex is required to target membrane protein cargos into vesicles assembled at cell bodies for delivery into neurites and nerve terminals. The BLOC-1 complex, in association with SNARE proteins, is also proposed to be involved in neurite extension. Plays a role in intracellular vesicle trafficking.</text>
</comment>
<comment type="subunit">
    <text evidence="1 5 6 7 10">Octamer composed of one copy each BLOC1S1, BLOC1S2, BLOC1S3, BLOC1S4, BLOC1S5, BLOC1S6, DTNBP1/BLOC1S7 and SNAPIN/BLOC1S8 (By similarity). Component of the biogenesis of lysosome-related organelles complex 1 (BLOC-1) composed of BLOC1S1, BLOC1S2, BLOC1S3, BLOC1S4, BLOC1S5, BLOC1S6, DTNBP1/BLOC1S7 and SNAPIN/BLOC1S8. The BLOC-1 complex associates with the AP-3 protein complex and membrane protein cargos. Interacts with BLOC1S4, BLOC1S6, DTNBP1/BLOC1S7 and PI4K2A.</text>
</comment>
<comment type="alternative products">
    <event type="alternative splicing"/>
    <isoform>
        <id>Q8R015-1</id>
        <name>1</name>
        <sequence type="displayed"/>
    </isoform>
    <isoform>
        <id>Q8R015-2</id>
        <name>2</name>
        <sequence type="described" ref="VSP_008196"/>
    </isoform>
</comment>
<comment type="tissue specificity">
    <text evidence="4">Detected in heart, brain, spleen, lung, kidney and testis.</text>
</comment>
<comment type="disease">
    <text evidence="4">Defects in Muted are the cause of the Muted (mu) mutant, which is characterized by light eyes at birth, hypopigmentation of the coat, platelet storage pool deficiency and lysosomal hyposecretion.</text>
</comment>
<comment type="similarity">
    <text evidence="12">Belongs to the BLOC1S5 family.</text>
</comment>
<dbReference type="EMBL" id="AF426433">
    <property type="protein sequence ID" value="AAL99384.1"/>
    <property type="molecule type" value="mRNA"/>
</dbReference>
<dbReference type="EMBL" id="AK039050">
    <property type="protein sequence ID" value="BAC30220.1"/>
    <property type="molecule type" value="mRNA"/>
</dbReference>
<dbReference type="EMBL" id="AK075808">
    <property type="protein sequence ID" value="BAC35976.1"/>
    <property type="molecule type" value="mRNA"/>
</dbReference>
<dbReference type="EMBL" id="AK147762">
    <property type="protein sequence ID" value="BAE28121.1"/>
    <property type="molecule type" value="mRNA"/>
</dbReference>
<dbReference type="EMBL" id="AK170614">
    <property type="protein sequence ID" value="BAE41913.1"/>
    <property type="molecule type" value="mRNA"/>
</dbReference>
<dbReference type="EMBL" id="BC023184">
    <property type="protein sequence ID" value="AAH23184.1"/>
    <property type="molecule type" value="mRNA"/>
</dbReference>
<dbReference type="EMBL" id="BC024720">
    <property type="protein sequence ID" value="AAH24720.1"/>
    <property type="molecule type" value="mRNA"/>
</dbReference>
<dbReference type="CCDS" id="CCDS26464.1">
    <molecule id="Q8R015-1"/>
</dbReference>
<dbReference type="RefSeq" id="NP_620702.1">
    <molecule id="Q8R015-1"/>
    <property type="nucleotide sequence ID" value="NM_139063.3"/>
</dbReference>
<dbReference type="SMR" id="Q8R015"/>
<dbReference type="BioGRID" id="201605">
    <property type="interactions" value="2"/>
</dbReference>
<dbReference type="ComplexPortal" id="CPX-1913">
    <property type="entry name" value="BLOC-1 complex"/>
</dbReference>
<dbReference type="CORUM" id="Q8R015"/>
<dbReference type="FunCoup" id="Q8R015">
    <property type="interactions" value="1794"/>
</dbReference>
<dbReference type="STRING" id="10090.ENSMUSP00000036614"/>
<dbReference type="iPTMnet" id="Q8R015"/>
<dbReference type="PhosphoSitePlus" id="Q8R015"/>
<dbReference type="PaxDb" id="10090-ENSMUSP00000036614"/>
<dbReference type="ProteomicsDB" id="273692">
    <molecule id="Q8R015-1"/>
</dbReference>
<dbReference type="ProteomicsDB" id="273693">
    <molecule id="Q8R015-2"/>
</dbReference>
<dbReference type="Pumba" id="Q8R015"/>
<dbReference type="DNASU" id="17828"/>
<dbReference type="Ensembl" id="ENSMUST00000035899.8">
    <molecule id="Q8R015-1"/>
    <property type="protein sequence ID" value="ENSMUSP00000036614.7"/>
    <property type="gene ID" value="ENSMUSG00000038982.11"/>
</dbReference>
<dbReference type="Ensembl" id="ENSMUST00000224902.2">
    <molecule id="Q8R015-2"/>
    <property type="protein sequence ID" value="ENSMUSP00000153368.2"/>
    <property type="gene ID" value="ENSMUSG00000038982.11"/>
</dbReference>
<dbReference type="GeneID" id="17828"/>
<dbReference type="KEGG" id="mmu:17828"/>
<dbReference type="UCSC" id="uc007qdu.1">
    <molecule id="Q8R015-1"/>
    <property type="organism name" value="mouse"/>
</dbReference>
<dbReference type="UCSC" id="uc007qdv.1">
    <molecule id="Q8R015-2"/>
    <property type="organism name" value="mouse"/>
</dbReference>
<dbReference type="AGR" id="MGI:2178598"/>
<dbReference type="CTD" id="63915"/>
<dbReference type="MGI" id="MGI:2178598">
    <property type="gene designation" value="Bloc1s5"/>
</dbReference>
<dbReference type="VEuPathDB" id="HostDB:ENSMUSG00000038982"/>
<dbReference type="eggNOG" id="ENOG502S2QH">
    <property type="taxonomic scope" value="Eukaryota"/>
</dbReference>
<dbReference type="GeneTree" id="ENSGT00390000016974"/>
<dbReference type="HOGENOM" id="CLU_110751_0_0_1"/>
<dbReference type="InParanoid" id="Q8R015"/>
<dbReference type="OMA" id="MHGNLNE"/>
<dbReference type="OrthoDB" id="18964at2759"/>
<dbReference type="PhylomeDB" id="Q8R015"/>
<dbReference type="TreeFam" id="TF332943"/>
<dbReference type="BioGRID-ORCS" id="17828">
    <property type="hits" value="1 hit in 77 CRISPR screens"/>
</dbReference>
<dbReference type="ChiTaRS" id="Bloc1s5">
    <property type="organism name" value="mouse"/>
</dbReference>
<dbReference type="PRO" id="PR:Q8R015"/>
<dbReference type="Proteomes" id="UP000000589">
    <property type="component" value="Chromosome 13"/>
</dbReference>
<dbReference type="RNAct" id="Q8R015">
    <property type="molecule type" value="protein"/>
</dbReference>
<dbReference type="Bgee" id="ENSMUSG00000038982">
    <property type="expression patterns" value="Expressed in epithelium of lens and 244 other cell types or tissues"/>
</dbReference>
<dbReference type="ExpressionAtlas" id="Q8R015">
    <property type="expression patterns" value="baseline and differential"/>
</dbReference>
<dbReference type="GO" id="GO:1904115">
    <property type="term" value="C:axon cytoplasm"/>
    <property type="evidence" value="ECO:0007669"/>
    <property type="project" value="GOC"/>
</dbReference>
<dbReference type="GO" id="GO:0031083">
    <property type="term" value="C:BLOC-1 complex"/>
    <property type="evidence" value="ECO:0000314"/>
    <property type="project" value="UniProtKB"/>
</dbReference>
<dbReference type="GO" id="GO:1990742">
    <property type="term" value="C:microvesicle"/>
    <property type="evidence" value="ECO:0000314"/>
    <property type="project" value="MGI"/>
</dbReference>
<dbReference type="GO" id="GO:0030133">
    <property type="term" value="C:transport vesicle"/>
    <property type="evidence" value="ECO:0000250"/>
    <property type="project" value="UniProtKB"/>
</dbReference>
<dbReference type="GO" id="GO:0008089">
    <property type="term" value="P:anterograde axonal transport"/>
    <property type="evidence" value="ECO:0000315"/>
    <property type="project" value="UniProtKB"/>
</dbReference>
<dbReference type="GO" id="GO:0048490">
    <property type="term" value="P:anterograde synaptic vesicle transport"/>
    <property type="evidence" value="ECO:0000315"/>
    <property type="project" value="UniProtKB"/>
</dbReference>
<dbReference type="GO" id="GO:0048066">
    <property type="term" value="P:developmental pigmentation"/>
    <property type="evidence" value="ECO:0000315"/>
    <property type="project" value="MGI"/>
</dbReference>
<dbReference type="GO" id="GO:0035646">
    <property type="term" value="P:endosome to melanosome transport"/>
    <property type="evidence" value="ECO:0000250"/>
    <property type="project" value="UniProtKB"/>
</dbReference>
<dbReference type="GO" id="GO:0032438">
    <property type="term" value="P:melanosome organization"/>
    <property type="evidence" value="ECO:0000303"/>
    <property type="project" value="ComplexPortal"/>
</dbReference>
<dbReference type="GO" id="GO:0032402">
    <property type="term" value="P:melanosome transport"/>
    <property type="evidence" value="ECO:0000250"/>
    <property type="project" value="UniProtKB"/>
</dbReference>
<dbReference type="GO" id="GO:0031175">
    <property type="term" value="P:neuron projection development"/>
    <property type="evidence" value="ECO:0000303"/>
    <property type="project" value="UniProtKB"/>
</dbReference>
<dbReference type="GO" id="GO:0032474">
    <property type="term" value="P:otolith morphogenesis"/>
    <property type="evidence" value="ECO:0000315"/>
    <property type="project" value="MGI"/>
</dbReference>
<dbReference type="GO" id="GO:0050942">
    <property type="term" value="P:positive regulation of pigment cell differentiation"/>
    <property type="evidence" value="ECO:0000250"/>
    <property type="project" value="UniProtKB"/>
</dbReference>
<dbReference type="GO" id="GO:0016192">
    <property type="term" value="P:vesicle-mediated transport"/>
    <property type="evidence" value="ECO:0000315"/>
    <property type="project" value="MGI"/>
</dbReference>
<dbReference type="InterPro" id="IPR017243">
    <property type="entry name" value="Bloc1s5"/>
</dbReference>
<dbReference type="PANTHER" id="PTHR31784">
    <property type="entry name" value="BIOGENESIS OF LYSOSOME-RELATED ORGANELLES COMPLEX 1 SUBUNIT 5"/>
    <property type="match status" value="1"/>
</dbReference>
<dbReference type="PANTHER" id="PTHR31784:SF2">
    <property type="entry name" value="BIOGENESIS OF LYSOSOME-RELATED ORGANELLES COMPLEX 1 SUBUNIT 5"/>
    <property type="match status" value="1"/>
</dbReference>
<dbReference type="Pfam" id="PF14942">
    <property type="entry name" value="Muted"/>
    <property type="match status" value="1"/>
</dbReference>
<dbReference type="PIRSF" id="PIRSF037610">
    <property type="entry name" value="BLOC-1_complex_muted_subunit"/>
    <property type="match status" value="1"/>
</dbReference>
<feature type="initiator methionine" description="Removed" evidence="2">
    <location>
        <position position="1"/>
    </location>
</feature>
<feature type="chain" id="PRO_0000096653" description="Biogenesis of lysosome-related organelles complex 1 subunit 5">
    <location>
        <begin position="2"/>
        <end position="185"/>
    </location>
</feature>
<feature type="region of interest" description="Disordered" evidence="3">
    <location>
        <begin position="1"/>
        <end position="25"/>
    </location>
</feature>
<feature type="modified residue" description="N-acetylserine" evidence="2">
    <location>
        <position position="2"/>
    </location>
</feature>
<feature type="splice variant" id="VSP_008196" description="In isoform 2." evidence="11">
    <original>VINDYLTASEKRRLVQWEEFVSGQPQRRAEVDEEHRRAVERLREQYAAMEKDLAKFSTF</original>
    <variation>GLLDPGLVDLGTLLTMSCRDPPVSDEPSCNAARNYSCLLHSRI</variation>
    <location>
        <begin position="127"/>
        <end position="185"/>
    </location>
</feature>
<reference key="1">
    <citation type="journal article" date="2002" name="Hum. Mol. Genet.">
        <title>The gene for the muted (mu) mouse, a model for Hermansky-Pudlak syndrome, defines a novel protein which regulates vesicle trafficking.</title>
        <authorList>
            <person name="Zhang Q."/>
            <person name="Li W."/>
            <person name="Novak E.K."/>
            <person name="Karim A."/>
            <person name="Mishra V.S."/>
            <person name="Kingsmore S.F."/>
            <person name="Roe B.A."/>
            <person name="Suzuki T."/>
            <person name="Swank R.T."/>
        </authorList>
    </citation>
    <scope>NUCLEOTIDE SEQUENCE [MRNA] (ISOFORM 1)</scope>
    <scope>FUNCTION</scope>
    <scope>DISEASE</scope>
    <scope>TISSUE SPECIFICITY</scope>
    <source>
        <strain>C57BL/6J</strain>
    </source>
</reference>
<reference key="2">
    <citation type="journal article" date="2005" name="Science">
        <title>The transcriptional landscape of the mammalian genome.</title>
        <authorList>
            <person name="Carninci P."/>
            <person name="Kasukawa T."/>
            <person name="Katayama S."/>
            <person name="Gough J."/>
            <person name="Frith M.C."/>
            <person name="Maeda N."/>
            <person name="Oyama R."/>
            <person name="Ravasi T."/>
            <person name="Lenhard B."/>
            <person name="Wells C."/>
            <person name="Kodzius R."/>
            <person name="Shimokawa K."/>
            <person name="Bajic V.B."/>
            <person name="Brenner S.E."/>
            <person name="Batalov S."/>
            <person name="Forrest A.R."/>
            <person name="Zavolan M."/>
            <person name="Davis M.J."/>
            <person name="Wilming L.G."/>
            <person name="Aidinis V."/>
            <person name="Allen J.E."/>
            <person name="Ambesi-Impiombato A."/>
            <person name="Apweiler R."/>
            <person name="Aturaliya R.N."/>
            <person name="Bailey T.L."/>
            <person name="Bansal M."/>
            <person name="Baxter L."/>
            <person name="Beisel K.W."/>
            <person name="Bersano T."/>
            <person name="Bono H."/>
            <person name="Chalk A.M."/>
            <person name="Chiu K.P."/>
            <person name="Choudhary V."/>
            <person name="Christoffels A."/>
            <person name="Clutterbuck D.R."/>
            <person name="Crowe M.L."/>
            <person name="Dalla E."/>
            <person name="Dalrymple B.P."/>
            <person name="de Bono B."/>
            <person name="Della Gatta G."/>
            <person name="di Bernardo D."/>
            <person name="Down T."/>
            <person name="Engstrom P."/>
            <person name="Fagiolini M."/>
            <person name="Faulkner G."/>
            <person name="Fletcher C.F."/>
            <person name="Fukushima T."/>
            <person name="Furuno M."/>
            <person name="Futaki S."/>
            <person name="Gariboldi M."/>
            <person name="Georgii-Hemming P."/>
            <person name="Gingeras T.R."/>
            <person name="Gojobori T."/>
            <person name="Green R.E."/>
            <person name="Gustincich S."/>
            <person name="Harbers M."/>
            <person name="Hayashi Y."/>
            <person name="Hensch T.K."/>
            <person name="Hirokawa N."/>
            <person name="Hill D."/>
            <person name="Huminiecki L."/>
            <person name="Iacono M."/>
            <person name="Ikeo K."/>
            <person name="Iwama A."/>
            <person name="Ishikawa T."/>
            <person name="Jakt M."/>
            <person name="Kanapin A."/>
            <person name="Katoh M."/>
            <person name="Kawasawa Y."/>
            <person name="Kelso J."/>
            <person name="Kitamura H."/>
            <person name="Kitano H."/>
            <person name="Kollias G."/>
            <person name="Krishnan S.P."/>
            <person name="Kruger A."/>
            <person name="Kummerfeld S.K."/>
            <person name="Kurochkin I.V."/>
            <person name="Lareau L.F."/>
            <person name="Lazarevic D."/>
            <person name="Lipovich L."/>
            <person name="Liu J."/>
            <person name="Liuni S."/>
            <person name="McWilliam S."/>
            <person name="Madan Babu M."/>
            <person name="Madera M."/>
            <person name="Marchionni L."/>
            <person name="Matsuda H."/>
            <person name="Matsuzawa S."/>
            <person name="Miki H."/>
            <person name="Mignone F."/>
            <person name="Miyake S."/>
            <person name="Morris K."/>
            <person name="Mottagui-Tabar S."/>
            <person name="Mulder N."/>
            <person name="Nakano N."/>
            <person name="Nakauchi H."/>
            <person name="Ng P."/>
            <person name="Nilsson R."/>
            <person name="Nishiguchi S."/>
            <person name="Nishikawa S."/>
            <person name="Nori F."/>
            <person name="Ohara O."/>
            <person name="Okazaki Y."/>
            <person name="Orlando V."/>
            <person name="Pang K.C."/>
            <person name="Pavan W.J."/>
            <person name="Pavesi G."/>
            <person name="Pesole G."/>
            <person name="Petrovsky N."/>
            <person name="Piazza S."/>
            <person name="Reed J."/>
            <person name="Reid J.F."/>
            <person name="Ring B.Z."/>
            <person name="Ringwald M."/>
            <person name="Rost B."/>
            <person name="Ruan Y."/>
            <person name="Salzberg S.L."/>
            <person name="Sandelin A."/>
            <person name="Schneider C."/>
            <person name="Schoenbach C."/>
            <person name="Sekiguchi K."/>
            <person name="Semple C.A."/>
            <person name="Seno S."/>
            <person name="Sessa L."/>
            <person name="Sheng Y."/>
            <person name="Shibata Y."/>
            <person name="Shimada H."/>
            <person name="Shimada K."/>
            <person name="Silva D."/>
            <person name="Sinclair B."/>
            <person name="Sperling S."/>
            <person name="Stupka E."/>
            <person name="Sugiura K."/>
            <person name="Sultana R."/>
            <person name="Takenaka Y."/>
            <person name="Taki K."/>
            <person name="Tammoja K."/>
            <person name="Tan S.L."/>
            <person name="Tang S."/>
            <person name="Taylor M.S."/>
            <person name="Tegner J."/>
            <person name="Teichmann S.A."/>
            <person name="Ueda H.R."/>
            <person name="van Nimwegen E."/>
            <person name="Verardo R."/>
            <person name="Wei C.L."/>
            <person name="Yagi K."/>
            <person name="Yamanishi H."/>
            <person name="Zabarovsky E."/>
            <person name="Zhu S."/>
            <person name="Zimmer A."/>
            <person name="Hide W."/>
            <person name="Bult C."/>
            <person name="Grimmond S.M."/>
            <person name="Teasdale R.D."/>
            <person name="Liu E.T."/>
            <person name="Brusic V."/>
            <person name="Quackenbush J."/>
            <person name="Wahlestedt C."/>
            <person name="Mattick J.S."/>
            <person name="Hume D.A."/>
            <person name="Kai C."/>
            <person name="Sasaki D."/>
            <person name="Tomaru Y."/>
            <person name="Fukuda S."/>
            <person name="Kanamori-Katayama M."/>
            <person name="Suzuki M."/>
            <person name="Aoki J."/>
            <person name="Arakawa T."/>
            <person name="Iida J."/>
            <person name="Imamura K."/>
            <person name="Itoh M."/>
            <person name="Kato T."/>
            <person name="Kawaji H."/>
            <person name="Kawagashira N."/>
            <person name="Kawashima T."/>
            <person name="Kojima M."/>
            <person name="Kondo S."/>
            <person name="Konno H."/>
            <person name="Nakano K."/>
            <person name="Ninomiya N."/>
            <person name="Nishio T."/>
            <person name="Okada M."/>
            <person name="Plessy C."/>
            <person name="Shibata K."/>
            <person name="Shiraki T."/>
            <person name="Suzuki S."/>
            <person name="Tagami M."/>
            <person name="Waki K."/>
            <person name="Watahiki A."/>
            <person name="Okamura-Oho Y."/>
            <person name="Suzuki H."/>
            <person name="Kawai J."/>
            <person name="Hayashizaki Y."/>
        </authorList>
    </citation>
    <scope>NUCLEOTIDE SEQUENCE [LARGE SCALE MRNA] (ISOFORMS 1 AND 2)</scope>
    <source>
        <strain>C57BL/6J</strain>
        <strain>NOD</strain>
        <tissue>Hypothalamus</tissue>
        <tissue>Pancreas</tissue>
    </source>
</reference>
<reference key="3">
    <citation type="journal article" date="2004" name="Genome Res.">
        <title>The status, quality, and expansion of the NIH full-length cDNA project: the Mammalian Gene Collection (MGC).</title>
        <authorList>
            <consortium name="The MGC Project Team"/>
        </authorList>
    </citation>
    <scope>NUCLEOTIDE SEQUENCE [LARGE SCALE MRNA]</scope>
    <source>
        <tissue>Eye</tissue>
    </source>
</reference>
<reference key="4">
    <citation type="journal article" date="2002" name="J. Biol. Chem.">
        <title>BLOC-1, a novel complex containing the pallidin and muted proteins involved in the biogenesis of melanosomes and platelet-dense granules.</title>
        <authorList>
            <person name="Falcon-Perez J.M."/>
            <person name="Starcevic M."/>
            <person name="Gautam R."/>
            <person name="Dell'Angelica E.C."/>
        </authorList>
    </citation>
    <scope>FUNCTION</scope>
    <scope>INTERACTION WITH BLOC1S6</scope>
    <scope>IDENTIFICATION IN THE BLOC-1 COMPLEX</scope>
</reference>
<reference key="5">
    <citation type="journal article" date="2003" name="Blood">
        <title>Cappuccino, a mouse model of Hermansky-Pudlak syndrome, encodes a novel protein that is part of the pallidin-muted complex (BLOC-1).</title>
        <authorList>
            <person name="Ciciotte S.L."/>
            <person name="Gwynn B."/>
            <person name="Moriyama K."/>
            <person name="Huizing M."/>
            <person name="Gahl W.A."/>
            <person name="Bonifacino J.S."/>
            <person name="Peters L.L."/>
        </authorList>
    </citation>
    <scope>IDENTIFICATION IN THE BLOC-1 COMPLEX</scope>
    <scope>INTERACTION WITH BLOC1S4 AND BLOC1S6</scope>
</reference>
<reference key="6">
    <citation type="journal article" date="2003" name="Nat. Genet.">
        <title>Hermansky-Pudlak syndrome type 7 (HPS-7) results from mutant dysbindin, a member of the biogenesis of lysosome-related organelles complex 1 (BLOC-1).</title>
        <authorList>
            <person name="Li W."/>
            <person name="Zhang Q."/>
            <person name="Oiso N."/>
            <person name="Novak E.K."/>
            <person name="Gautam R."/>
            <person name="O'Brien E.P."/>
            <person name="Tinsley C.L."/>
            <person name="Blake D.J."/>
            <person name="Spritz R.A."/>
            <person name="Copeland N.G."/>
            <person name="Jenkins N.A."/>
            <person name="Amato D."/>
            <person name="Roe B.A."/>
            <person name="Starcevic M."/>
            <person name="Dell'Angelica E.C."/>
            <person name="Elliott R.W."/>
            <person name="Mishra V."/>
            <person name="Kingsmore S.F."/>
            <person name="Paylor R.E."/>
            <person name="Swank R.T."/>
        </authorList>
    </citation>
    <scope>INTERACTION WITH DTNBP1</scope>
</reference>
<reference key="7">
    <citation type="journal article" date="2006" name="Mol. Biol. Cell">
        <title>BLOC-1 complex deficiency alters the targeting of adaptor protein complex-3 cargoes.</title>
        <authorList>
            <person name="Salazar G."/>
            <person name="Craige B."/>
            <person name="Styers M.L."/>
            <person name="Newell-Litwa K.A."/>
            <person name="Doucette M.M."/>
            <person name="Wainer B.H."/>
            <person name="Falcon-Perez J.M."/>
            <person name="Dell'Angelica E.C."/>
            <person name="Peden A.A."/>
            <person name="Werner E."/>
            <person name="Faundez V."/>
        </authorList>
    </citation>
    <scope>FUNCTION</scope>
</reference>
<reference key="8">
    <citation type="journal article" date="2010" name="Cell">
        <title>A tissue-specific atlas of mouse protein phosphorylation and expression.</title>
        <authorList>
            <person name="Huttlin E.L."/>
            <person name="Jedrychowski M.P."/>
            <person name="Elias J.E."/>
            <person name="Goswami T."/>
            <person name="Rad R."/>
            <person name="Beausoleil S.A."/>
            <person name="Villen J."/>
            <person name="Haas W."/>
            <person name="Sowa M.E."/>
            <person name="Gygi S.P."/>
        </authorList>
    </citation>
    <scope>IDENTIFICATION BY MASS SPECTROMETRY [LARGE SCALE ANALYSIS]</scope>
    <source>
        <tissue>Liver</tissue>
        <tissue>Spleen</tissue>
        <tissue>Testis</tissue>
    </source>
</reference>
<reference key="9">
    <citation type="journal article" date="2010" name="Mol. Psychiatry">
        <title>The dysbindin-containing complex (BLOC-1) in brain: developmental regulation, interaction with SNARE proteins and role in neurite outgrowth.</title>
        <authorList>
            <person name="Ghiani C.A."/>
            <person name="Starcevic M."/>
            <person name="Rodriguez-Fernandez I.A."/>
            <person name="Nazarian R."/>
            <person name="Cheli V.T."/>
            <person name="Chan L.N."/>
            <person name="Malvar J.S."/>
            <person name="de Vellis J."/>
            <person name="Sabatti C."/>
            <person name="Dell'Angelica E.C."/>
        </authorList>
    </citation>
    <scope>FUNCTION</scope>
</reference>
<reference key="10">
    <citation type="journal article" date="2011" name="Mol. Biol. Cell">
        <title>The schizophrenia susceptibility factor dysbindin and its associated complex sort cargoes from cell bodies to the synapse.</title>
        <authorList>
            <person name="Larimore J."/>
            <person name="Tornieri K."/>
            <person name="Ryder P.V."/>
            <person name="Gokhale A."/>
            <person name="Zlatic S.A."/>
            <person name="Craige B."/>
            <person name="Lee J.D."/>
            <person name="Talbot K."/>
            <person name="Pare J.F."/>
            <person name="Smith Y."/>
            <person name="Faundez V."/>
        </authorList>
    </citation>
    <scope>FUNCTION</scope>
    <scope>ASSOCIATION WITH THE AP-3 COMPLEX</scope>
    <scope>INTERACTION WITH PI4K2A AND BLOC1S6</scope>
</reference>
<sequence length="185" mass="21283">MSGGGTETPVACDAAQGGKKRDSLGTPGAAHLIIKDLGEIHSRLLDHRPVTQGEIRYFVKEFEEKRGLRELRVLKNLENTIQETNECLLPKCRETMECGLGETLQRLQAANDSICRLQQREQERKKVINDYLTASEKRRLVQWEEFVSGQPQRRAEVDEEHRRAVERLREQYAAMEKDLAKFSTF</sequence>
<organism>
    <name type="scientific">Mus musculus</name>
    <name type="common">Mouse</name>
    <dbReference type="NCBI Taxonomy" id="10090"/>
    <lineage>
        <taxon>Eukaryota</taxon>
        <taxon>Metazoa</taxon>
        <taxon>Chordata</taxon>
        <taxon>Craniata</taxon>
        <taxon>Vertebrata</taxon>
        <taxon>Euteleostomi</taxon>
        <taxon>Mammalia</taxon>
        <taxon>Eutheria</taxon>
        <taxon>Euarchontoglires</taxon>
        <taxon>Glires</taxon>
        <taxon>Rodentia</taxon>
        <taxon>Myomorpha</taxon>
        <taxon>Muroidea</taxon>
        <taxon>Muridae</taxon>
        <taxon>Murinae</taxon>
        <taxon>Mus</taxon>
        <taxon>Mus</taxon>
    </lineage>
</organism>